<accession>Q9IA09</accession>
<proteinExistence type="inferred from homology"/>
<sequence length="90" mass="10154">MEANSRVMVRVLLLALVVQVTLSQHWSYGWLPGGKRSVGELEATIRMMGTGEVVSLPEEASAQTQERLRPYNVINDDSSHFDRKKRSPNK</sequence>
<feature type="signal peptide" evidence="1">
    <location>
        <begin position="1"/>
        <end position="23"/>
    </location>
</feature>
<feature type="chain" id="PRO_0000012502" description="Progonadoliberin-3">
    <location>
        <begin position="24"/>
        <end position="90"/>
    </location>
</feature>
<feature type="peptide" id="PRO_0000012503" description="Gonadoliberin-3">
    <location>
        <begin position="24"/>
        <end position="33"/>
    </location>
</feature>
<feature type="peptide" id="PRO_0000012504" description="GnRH-associated peptide 3" evidence="2">
    <location>
        <begin position="37"/>
        <end position="82"/>
    </location>
</feature>
<feature type="region of interest" description="Disordered" evidence="3">
    <location>
        <begin position="56"/>
        <end position="90"/>
    </location>
</feature>
<feature type="modified residue" description="Pyrrolidone carboxylic acid" evidence="1">
    <location>
        <position position="24"/>
    </location>
</feature>
<feature type="modified residue" description="Glycine amide" evidence="1">
    <location>
        <position position="33"/>
    </location>
</feature>
<evidence type="ECO:0000250" key="1"/>
<evidence type="ECO:0000255" key="2"/>
<evidence type="ECO:0000256" key="3">
    <source>
        <dbReference type="SAM" id="MobiDB-lite"/>
    </source>
</evidence>
<evidence type="ECO:0000305" key="4"/>
<gene>
    <name type="primary">gnrh3</name>
</gene>
<keyword id="KW-0027">Amidation</keyword>
<keyword id="KW-0165">Cleavage on pair of basic residues</keyword>
<keyword id="KW-0372">Hormone</keyword>
<keyword id="KW-0873">Pyrrolidone carboxylic acid</keyword>
<keyword id="KW-1185">Reference proteome</keyword>
<keyword id="KW-0964">Secreted</keyword>
<keyword id="KW-0732">Signal</keyword>
<dbReference type="EMBL" id="AF224280">
    <property type="protein sequence ID" value="AAF62899.1"/>
    <property type="molecule type" value="mRNA"/>
</dbReference>
<dbReference type="Proteomes" id="UP000694389">
    <property type="component" value="Unplaced"/>
</dbReference>
<dbReference type="GO" id="GO:0005615">
    <property type="term" value="C:extracellular space"/>
    <property type="evidence" value="ECO:0000250"/>
    <property type="project" value="UniProtKB"/>
</dbReference>
<dbReference type="GO" id="GO:0005183">
    <property type="term" value="F:gonadotropin hormone-releasing hormone activity"/>
    <property type="evidence" value="ECO:0007669"/>
    <property type="project" value="TreeGrafter"/>
</dbReference>
<dbReference type="GO" id="GO:0031530">
    <property type="term" value="F:gonadotropin-releasing hormone receptor binding"/>
    <property type="evidence" value="ECO:0007669"/>
    <property type="project" value="TreeGrafter"/>
</dbReference>
<dbReference type="InterPro" id="IPR002012">
    <property type="entry name" value="GnRH"/>
</dbReference>
<dbReference type="InterPro" id="IPR019792">
    <property type="entry name" value="Gonadoliberin"/>
</dbReference>
<dbReference type="PANTHER" id="PTHR10522">
    <property type="entry name" value="GONADOLIBERIN"/>
    <property type="match status" value="1"/>
</dbReference>
<dbReference type="PANTHER" id="PTHR10522:SF6">
    <property type="entry name" value="PROGONADOLIBERIN-2"/>
    <property type="match status" value="1"/>
</dbReference>
<dbReference type="Pfam" id="PF00446">
    <property type="entry name" value="GnRH"/>
    <property type="match status" value="1"/>
</dbReference>
<dbReference type="PROSITE" id="PS00473">
    <property type="entry name" value="GNRH"/>
    <property type="match status" value="1"/>
</dbReference>
<reference key="1">
    <citation type="journal article" date="2001" name="J. Comp. Neurol.">
        <title>Differential expression of three different prepro-GnRH (gonadotrophin-releasing hormone) messengers in the brain of the European sea bass (Dicentrarchus labrax).</title>
        <authorList>
            <person name="Gonzalez-Martinez D."/>
            <person name="Madigou T."/>
            <person name="Zmora N."/>
            <person name="Anglade I."/>
            <person name="Zanuy S."/>
            <person name="Zohar Y."/>
            <person name="Elizur A."/>
            <person name="Munoz-Cueto J.A."/>
            <person name="Kah O."/>
        </authorList>
    </citation>
    <scope>NUCLEOTIDE SEQUENCE [MRNA]</scope>
    <source>
        <tissue>Brain</tissue>
    </source>
</reference>
<organism>
    <name type="scientific">Dicentrarchus labrax</name>
    <name type="common">European seabass</name>
    <name type="synonym">Morone labrax</name>
    <dbReference type="NCBI Taxonomy" id="13489"/>
    <lineage>
        <taxon>Eukaryota</taxon>
        <taxon>Metazoa</taxon>
        <taxon>Chordata</taxon>
        <taxon>Craniata</taxon>
        <taxon>Vertebrata</taxon>
        <taxon>Euteleostomi</taxon>
        <taxon>Actinopterygii</taxon>
        <taxon>Neopterygii</taxon>
        <taxon>Teleostei</taxon>
        <taxon>Neoteleostei</taxon>
        <taxon>Acanthomorphata</taxon>
        <taxon>Eupercaria</taxon>
        <taxon>Moronidae</taxon>
        <taxon>Dicentrarchus</taxon>
    </lineage>
</organism>
<protein>
    <recommendedName>
        <fullName>Progonadoliberin-3</fullName>
    </recommendedName>
    <alternativeName>
        <fullName>Progonadoliberin III</fullName>
    </alternativeName>
    <component>
        <recommendedName>
            <fullName>Gonadoliberin-3</fullName>
        </recommendedName>
        <alternativeName>
            <fullName>Gonadoliberin III</fullName>
        </alternativeName>
        <alternativeName>
            <fullName>Gonadotropin-releasing hormone III</fullName>
            <shortName>GnRH III</shortName>
        </alternativeName>
        <alternativeName>
            <fullName>Luliberin III</fullName>
        </alternativeName>
        <alternativeName>
            <fullName>Luteinizing hormone-releasing hormone III</fullName>
            <shortName>LH-RH III</shortName>
        </alternativeName>
    </component>
    <component>
        <recommendedName>
            <fullName>GnRH-associated peptide 3</fullName>
        </recommendedName>
        <alternativeName>
            <fullName>GnRH-associated peptide III</fullName>
        </alternativeName>
    </component>
</protein>
<name>GON3_DICLA</name>
<comment type="function">
    <text evidence="1">Stimulates the secretion of gonadotropins.</text>
</comment>
<comment type="subcellular location">
    <subcellularLocation>
        <location>Secreted</location>
    </subcellularLocation>
</comment>
<comment type="similarity">
    <text evidence="4">Belongs to the GnRH family.</text>
</comment>